<keyword id="KW-0238">DNA-binding</keyword>
<keyword id="KW-1185">Reference proteome</keyword>
<keyword id="KW-0804">Transcription</keyword>
<keyword id="KW-0805">Transcription regulation</keyword>
<feature type="chain" id="PRO_0000194616" description="Uncharacterized HTH-type transcriptional regulator YijO">
    <location>
        <begin position="1"/>
        <end position="283"/>
    </location>
</feature>
<feature type="domain" description="HTH araC/xylS-type" evidence="1">
    <location>
        <begin position="172"/>
        <end position="270"/>
    </location>
</feature>
<feature type="DNA-binding region" description="H-T-H motif" evidence="1">
    <location>
        <begin position="189"/>
        <end position="210"/>
    </location>
</feature>
<feature type="DNA-binding region" description="H-T-H motif" evidence="1">
    <location>
        <begin position="237"/>
        <end position="260"/>
    </location>
</feature>
<organism>
    <name type="scientific">Escherichia coli (strain K12)</name>
    <dbReference type="NCBI Taxonomy" id="83333"/>
    <lineage>
        <taxon>Bacteria</taxon>
        <taxon>Pseudomonadati</taxon>
        <taxon>Pseudomonadota</taxon>
        <taxon>Gammaproteobacteria</taxon>
        <taxon>Enterobacterales</taxon>
        <taxon>Enterobacteriaceae</taxon>
        <taxon>Escherichia</taxon>
    </lineage>
</organism>
<dbReference type="EMBL" id="U00006">
    <property type="protein sequence ID" value="AAC43060.1"/>
    <property type="molecule type" value="Genomic_DNA"/>
</dbReference>
<dbReference type="EMBL" id="U00096">
    <property type="protein sequence ID" value="AAC76936.1"/>
    <property type="molecule type" value="Genomic_DNA"/>
</dbReference>
<dbReference type="EMBL" id="AP009048">
    <property type="protein sequence ID" value="BAE77357.1"/>
    <property type="molecule type" value="Genomic_DNA"/>
</dbReference>
<dbReference type="PIR" id="E65202">
    <property type="entry name" value="E65202"/>
</dbReference>
<dbReference type="RefSeq" id="NP_418389.1">
    <property type="nucleotide sequence ID" value="NC_000913.3"/>
</dbReference>
<dbReference type="RefSeq" id="WP_000274636.1">
    <property type="nucleotide sequence ID" value="NZ_STEB01000037.1"/>
</dbReference>
<dbReference type="SMR" id="P32677"/>
<dbReference type="BioGRID" id="4259448">
    <property type="interactions" value="91"/>
</dbReference>
<dbReference type="BioGRID" id="852747">
    <property type="interactions" value="4"/>
</dbReference>
<dbReference type="FunCoup" id="P32677">
    <property type="interactions" value="40"/>
</dbReference>
<dbReference type="IntAct" id="P32677">
    <property type="interactions" value="4"/>
</dbReference>
<dbReference type="STRING" id="511145.b3954"/>
<dbReference type="PaxDb" id="511145-b3954"/>
<dbReference type="DNASU" id="948451"/>
<dbReference type="EnsemblBacteria" id="AAC76936">
    <property type="protein sequence ID" value="AAC76936"/>
    <property type="gene ID" value="b3954"/>
</dbReference>
<dbReference type="GeneID" id="948451"/>
<dbReference type="KEGG" id="ecj:JW3926"/>
<dbReference type="KEGG" id="eco:b3954"/>
<dbReference type="KEGG" id="ecoc:C3026_21365"/>
<dbReference type="PATRIC" id="fig|1411691.4.peg.2751"/>
<dbReference type="EchoBASE" id="EB1857"/>
<dbReference type="eggNOG" id="COG2207">
    <property type="taxonomic scope" value="Bacteria"/>
</dbReference>
<dbReference type="HOGENOM" id="CLU_000445_81_2_6"/>
<dbReference type="InParanoid" id="P32677"/>
<dbReference type="OMA" id="HEMQMQP"/>
<dbReference type="OrthoDB" id="1050625at2"/>
<dbReference type="PhylomeDB" id="P32677"/>
<dbReference type="BioCyc" id="EcoCyc:EG11913-MONOMER"/>
<dbReference type="PRO" id="PR:P32677"/>
<dbReference type="Proteomes" id="UP000000625">
    <property type="component" value="Chromosome"/>
</dbReference>
<dbReference type="GO" id="GO:0003700">
    <property type="term" value="F:DNA-binding transcription factor activity"/>
    <property type="evidence" value="ECO:0007669"/>
    <property type="project" value="InterPro"/>
</dbReference>
<dbReference type="GO" id="GO:0043565">
    <property type="term" value="F:sequence-specific DNA binding"/>
    <property type="evidence" value="ECO:0007669"/>
    <property type="project" value="InterPro"/>
</dbReference>
<dbReference type="FunFam" id="1.10.10.60:FF:000149">
    <property type="entry name" value="AraC family transcriptional regulator"/>
    <property type="match status" value="1"/>
</dbReference>
<dbReference type="FunFam" id="1.10.10.60:FF:000156">
    <property type="entry name" value="AraC family transcriptional regulator"/>
    <property type="match status" value="1"/>
</dbReference>
<dbReference type="Gene3D" id="1.10.10.60">
    <property type="entry name" value="Homeodomain-like"/>
    <property type="match status" value="2"/>
</dbReference>
<dbReference type="InterPro" id="IPR009057">
    <property type="entry name" value="Homeodomain-like_sf"/>
</dbReference>
<dbReference type="InterPro" id="IPR018060">
    <property type="entry name" value="HTH_AraC"/>
</dbReference>
<dbReference type="InterPro" id="IPR018062">
    <property type="entry name" value="HTH_AraC-typ_CS"/>
</dbReference>
<dbReference type="InterPro" id="IPR020449">
    <property type="entry name" value="Tscrpt_reg_AraC-type_HTH"/>
</dbReference>
<dbReference type="PANTHER" id="PTHR43280">
    <property type="entry name" value="ARAC-FAMILY TRANSCRIPTIONAL REGULATOR"/>
    <property type="match status" value="1"/>
</dbReference>
<dbReference type="PANTHER" id="PTHR43280:SF10">
    <property type="entry name" value="REGULATORY PROTEIN POCR"/>
    <property type="match status" value="1"/>
</dbReference>
<dbReference type="Pfam" id="PF12833">
    <property type="entry name" value="HTH_18"/>
    <property type="match status" value="1"/>
</dbReference>
<dbReference type="PRINTS" id="PR00032">
    <property type="entry name" value="HTHARAC"/>
</dbReference>
<dbReference type="SMART" id="SM00342">
    <property type="entry name" value="HTH_ARAC"/>
    <property type="match status" value="1"/>
</dbReference>
<dbReference type="SUPFAM" id="SSF46689">
    <property type="entry name" value="Homeodomain-like"/>
    <property type="match status" value="1"/>
</dbReference>
<dbReference type="PROSITE" id="PS00041">
    <property type="entry name" value="HTH_ARAC_FAMILY_1"/>
    <property type="match status" value="1"/>
</dbReference>
<dbReference type="PROSITE" id="PS01124">
    <property type="entry name" value="HTH_ARAC_FAMILY_2"/>
    <property type="match status" value="1"/>
</dbReference>
<protein>
    <recommendedName>
        <fullName>Uncharacterized HTH-type transcriptional regulator YijO</fullName>
    </recommendedName>
</protein>
<reference key="1">
    <citation type="journal article" date="1993" name="Nucleic Acids Res.">
        <title>Analysis of the Escherichia coli genome. IV. DNA sequence of the region from 89.2 to 92.8 minutes.</title>
        <authorList>
            <person name="Blattner F.R."/>
            <person name="Burland V.D."/>
            <person name="Plunkett G. III"/>
            <person name="Sofia H.J."/>
            <person name="Daniels D.L."/>
        </authorList>
    </citation>
    <scope>NUCLEOTIDE SEQUENCE [LARGE SCALE GENOMIC DNA]</scope>
    <source>
        <strain>K12 / MG1655 / ATCC 47076</strain>
    </source>
</reference>
<reference key="2">
    <citation type="journal article" date="1997" name="Science">
        <title>The complete genome sequence of Escherichia coli K-12.</title>
        <authorList>
            <person name="Blattner F.R."/>
            <person name="Plunkett G. III"/>
            <person name="Bloch C.A."/>
            <person name="Perna N.T."/>
            <person name="Burland V."/>
            <person name="Riley M."/>
            <person name="Collado-Vides J."/>
            <person name="Glasner J.D."/>
            <person name="Rode C.K."/>
            <person name="Mayhew G.F."/>
            <person name="Gregor J."/>
            <person name="Davis N.W."/>
            <person name="Kirkpatrick H.A."/>
            <person name="Goeden M.A."/>
            <person name="Rose D.J."/>
            <person name="Mau B."/>
            <person name="Shao Y."/>
        </authorList>
    </citation>
    <scope>NUCLEOTIDE SEQUENCE [LARGE SCALE GENOMIC DNA]</scope>
    <source>
        <strain>K12 / MG1655 / ATCC 47076</strain>
    </source>
</reference>
<reference key="3">
    <citation type="journal article" date="2006" name="Mol. Syst. Biol.">
        <title>Highly accurate genome sequences of Escherichia coli K-12 strains MG1655 and W3110.</title>
        <authorList>
            <person name="Hayashi K."/>
            <person name="Morooka N."/>
            <person name="Yamamoto Y."/>
            <person name="Fujita K."/>
            <person name="Isono K."/>
            <person name="Choi S."/>
            <person name="Ohtsubo E."/>
            <person name="Baba T."/>
            <person name="Wanner B.L."/>
            <person name="Mori H."/>
            <person name="Horiuchi T."/>
        </authorList>
    </citation>
    <scope>NUCLEOTIDE SEQUENCE [LARGE SCALE GENOMIC DNA]</scope>
    <source>
        <strain>K12 / W3110 / ATCC 27325 / DSM 5911</strain>
    </source>
</reference>
<name>YIJO_ECOLI</name>
<evidence type="ECO:0000255" key="1">
    <source>
        <dbReference type="PROSITE-ProRule" id="PRU00593"/>
    </source>
</evidence>
<sequence length="283" mass="32149">MYHDVSYLLSRLINGPLSLRQIYFASSNGPVPDLAYQVDFPRLEIVLEGEFVDTGAGATLVPGDVLYVPAGGWNFPQWQAPATTFSVLFGKQQLGFSVVQWDGKQYQNLAKQHVARRGPRIGSFLLQTLNEMQMQPQEQQTARLIVASLLSHCRDLLGSQIQTASRSQALFEAIRDYIDERYASALTRESVAQAFYISPNYLSHLFQKTGAIGFNEYLNHTRLEHAKTLLKGYDLKVKEVAHACGFVDSNYFCRLFRKNTERSPSEYRRQYHSQLTEKPTTPE</sequence>
<accession>P32677</accession>
<accession>Q2M8P9</accession>
<proteinExistence type="predicted"/>
<gene>
    <name type="primary">yijO</name>
    <name type="ordered locus">b3954</name>
    <name type="ordered locus">JW3926</name>
</gene>